<reference key="1">
    <citation type="submission" date="2008-02" db="EMBL/GenBank/DDBJ databases">
        <title>Complete sequence of Haemophilus somnus 2336.</title>
        <authorList>
            <consortium name="US DOE Joint Genome Institute"/>
            <person name="Siddaramappa S."/>
            <person name="Duncan A.J."/>
            <person name="Challacombe J.F."/>
            <person name="Rainey D."/>
            <person name="Gillaspy A.F."/>
            <person name="Carson M."/>
            <person name="Gipson J."/>
            <person name="Gipson M."/>
            <person name="Bruce D."/>
            <person name="Detter J.C."/>
            <person name="Han C.S."/>
            <person name="Land M."/>
            <person name="Tapia R."/>
            <person name="Thompson L.S."/>
            <person name="Orvis J."/>
            <person name="Zaitshik J."/>
            <person name="Barnes G."/>
            <person name="Brettin T.S."/>
            <person name="Dyer D.W."/>
            <person name="Inzana T.J."/>
        </authorList>
    </citation>
    <scope>NUCLEOTIDE SEQUENCE [LARGE SCALE GENOMIC DNA]</scope>
    <source>
        <strain>2336</strain>
    </source>
</reference>
<keyword id="KW-0067">ATP-binding</keyword>
<keyword id="KW-0963">Cytoplasm</keyword>
<keyword id="KW-0347">Helicase</keyword>
<keyword id="KW-0378">Hydrolase</keyword>
<keyword id="KW-0547">Nucleotide-binding</keyword>
<keyword id="KW-0694">RNA-binding</keyword>
<comment type="function">
    <text evidence="1">DEAD-box RNA helicase involved in RNA degradation. Has RNA-dependent ATPase activity and unwinds double-stranded RNA.</text>
</comment>
<comment type="catalytic activity">
    <reaction evidence="1">
        <text>ATP + H2O = ADP + phosphate + H(+)</text>
        <dbReference type="Rhea" id="RHEA:13065"/>
        <dbReference type="ChEBI" id="CHEBI:15377"/>
        <dbReference type="ChEBI" id="CHEBI:15378"/>
        <dbReference type="ChEBI" id="CHEBI:30616"/>
        <dbReference type="ChEBI" id="CHEBI:43474"/>
        <dbReference type="ChEBI" id="CHEBI:456216"/>
        <dbReference type="EC" id="3.6.4.13"/>
    </reaction>
</comment>
<comment type="subunit">
    <text evidence="1">Component of the RNA degradosome, which is a multiprotein complex involved in RNA processing and mRNA degradation.</text>
</comment>
<comment type="subcellular location">
    <subcellularLocation>
        <location evidence="1">Cytoplasm</location>
    </subcellularLocation>
</comment>
<comment type="similarity">
    <text evidence="1">Belongs to the DEAD box helicase family. RhlB subfamily.</text>
</comment>
<proteinExistence type="inferred from homology"/>
<organism>
    <name type="scientific">Histophilus somni (strain 2336)</name>
    <name type="common">Haemophilus somnus</name>
    <dbReference type="NCBI Taxonomy" id="228400"/>
    <lineage>
        <taxon>Bacteria</taxon>
        <taxon>Pseudomonadati</taxon>
        <taxon>Pseudomonadota</taxon>
        <taxon>Gammaproteobacteria</taxon>
        <taxon>Pasteurellales</taxon>
        <taxon>Pasteurellaceae</taxon>
        <taxon>Histophilus</taxon>
    </lineage>
</organism>
<dbReference type="EC" id="3.6.4.13" evidence="1"/>
<dbReference type="EMBL" id="CP000947">
    <property type="protein sequence ID" value="ACA32052.1"/>
    <property type="molecule type" value="Genomic_DNA"/>
</dbReference>
<dbReference type="RefSeq" id="WP_012341256.1">
    <property type="nucleotide sequence ID" value="NC_010519.1"/>
</dbReference>
<dbReference type="SMR" id="B0UUZ9"/>
<dbReference type="STRING" id="228400.HSM_0041"/>
<dbReference type="GeneID" id="31486316"/>
<dbReference type="KEGG" id="hsm:HSM_0041"/>
<dbReference type="HOGENOM" id="CLU_003041_1_3_6"/>
<dbReference type="GO" id="GO:0005829">
    <property type="term" value="C:cytosol"/>
    <property type="evidence" value="ECO:0007669"/>
    <property type="project" value="TreeGrafter"/>
</dbReference>
<dbReference type="GO" id="GO:0005524">
    <property type="term" value="F:ATP binding"/>
    <property type="evidence" value="ECO:0007669"/>
    <property type="project" value="UniProtKB-UniRule"/>
</dbReference>
<dbReference type="GO" id="GO:0016887">
    <property type="term" value="F:ATP hydrolysis activity"/>
    <property type="evidence" value="ECO:0007669"/>
    <property type="project" value="RHEA"/>
</dbReference>
<dbReference type="GO" id="GO:0003723">
    <property type="term" value="F:RNA binding"/>
    <property type="evidence" value="ECO:0007669"/>
    <property type="project" value="UniProtKB-UniRule"/>
</dbReference>
<dbReference type="GO" id="GO:0003724">
    <property type="term" value="F:RNA helicase activity"/>
    <property type="evidence" value="ECO:0007669"/>
    <property type="project" value="UniProtKB-UniRule"/>
</dbReference>
<dbReference type="GO" id="GO:0006401">
    <property type="term" value="P:RNA catabolic process"/>
    <property type="evidence" value="ECO:0007669"/>
    <property type="project" value="UniProtKB-UniRule"/>
</dbReference>
<dbReference type="CDD" id="cd00268">
    <property type="entry name" value="DEADc"/>
    <property type="match status" value="1"/>
</dbReference>
<dbReference type="CDD" id="cd18787">
    <property type="entry name" value="SF2_C_DEAD"/>
    <property type="match status" value="1"/>
</dbReference>
<dbReference type="FunFam" id="3.40.50.300:FF:000312">
    <property type="entry name" value="ATP-dependent RNA helicase RhlB"/>
    <property type="match status" value="1"/>
</dbReference>
<dbReference type="Gene3D" id="3.40.50.300">
    <property type="entry name" value="P-loop containing nucleotide triphosphate hydrolases"/>
    <property type="match status" value="2"/>
</dbReference>
<dbReference type="HAMAP" id="MF_00661">
    <property type="entry name" value="DEAD_helicase_RhlB"/>
    <property type="match status" value="1"/>
</dbReference>
<dbReference type="InterPro" id="IPR011545">
    <property type="entry name" value="DEAD/DEAH_box_helicase_dom"/>
</dbReference>
<dbReference type="InterPro" id="IPR050079">
    <property type="entry name" value="DEAD_box_RNA_helicase"/>
</dbReference>
<dbReference type="InterPro" id="IPR014001">
    <property type="entry name" value="Helicase_ATP-bd"/>
</dbReference>
<dbReference type="InterPro" id="IPR001650">
    <property type="entry name" value="Helicase_C-like"/>
</dbReference>
<dbReference type="InterPro" id="IPR027417">
    <property type="entry name" value="P-loop_NTPase"/>
</dbReference>
<dbReference type="InterPro" id="IPR000629">
    <property type="entry name" value="RNA-helicase_DEAD-box_CS"/>
</dbReference>
<dbReference type="InterPro" id="IPR023554">
    <property type="entry name" value="RNA_helicase_ATP-dep_RhlB"/>
</dbReference>
<dbReference type="InterPro" id="IPR014014">
    <property type="entry name" value="RNA_helicase_DEAD_Q_motif"/>
</dbReference>
<dbReference type="NCBIfam" id="NF003419">
    <property type="entry name" value="PRK04837.1"/>
    <property type="match status" value="1"/>
</dbReference>
<dbReference type="PANTHER" id="PTHR47959:SF10">
    <property type="entry name" value="ATP-DEPENDENT RNA HELICASE RHLB"/>
    <property type="match status" value="1"/>
</dbReference>
<dbReference type="PANTHER" id="PTHR47959">
    <property type="entry name" value="ATP-DEPENDENT RNA HELICASE RHLE-RELATED"/>
    <property type="match status" value="1"/>
</dbReference>
<dbReference type="Pfam" id="PF00270">
    <property type="entry name" value="DEAD"/>
    <property type="match status" value="1"/>
</dbReference>
<dbReference type="Pfam" id="PF00271">
    <property type="entry name" value="Helicase_C"/>
    <property type="match status" value="1"/>
</dbReference>
<dbReference type="SMART" id="SM00487">
    <property type="entry name" value="DEXDc"/>
    <property type="match status" value="1"/>
</dbReference>
<dbReference type="SMART" id="SM00490">
    <property type="entry name" value="HELICc"/>
    <property type="match status" value="1"/>
</dbReference>
<dbReference type="SUPFAM" id="SSF52540">
    <property type="entry name" value="P-loop containing nucleoside triphosphate hydrolases"/>
    <property type="match status" value="1"/>
</dbReference>
<dbReference type="PROSITE" id="PS00039">
    <property type="entry name" value="DEAD_ATP_HELICASE"/>
    <property type="match status" value="1"/>
</dbReference>
<dbReference type="PROSITE" id="PS51192">
    <property type="entry name" value="HELICASE_ATP_BIND_1"/>
    <property type="match status" value="1"/>
</dbReference>
<dbReference type="PROSITE" id="PS51194">
    <property type="entry name" value="HELICASE_CTER"/>
    <property type="match status" value="1"/>
</dbReference>
<dbReference type="PROSITE" id="PS51195">
    <property type="entry name" value="Q_MOTIF"/>
    <property type="match status" value="1"/>
</dbReference>
<evidence type="ECO:0000255" key="1">
    <source>
        <dbReference type="HAMAP-Rule" id="MF_00661"/>
    </source>
</evidence>
<feature type="chain" id="PRO_1000082848" description="ATP-dependent RNA helicase RhlB">
    <location>
        <begin position="1"/>
        <end position="419"/>
    </location>
</feature>
<feature type="domain" description="Helicase ATP-binding" evidence="1">
    <location>
        <begin position="40"/>
        <end position="217"/>
    </location>
</feature>
<feature type="domain" description="Helicase C-terminal" evidence="1">
    <location>
        <begin position="241"/>
        <end position="388"/>
    </location>
</feature>
<feature type="short sequence motif" description="Q motif">
    <location>
        <begin position="9"/>
        <end position="37"/>
    </location>
</feature>
<feature type="short sequence motif" description="DEAD box">
    <location>
        <begin position="163"/>
        <end position="166"/>
    </location>
</feature>
<feature type="binding site" evidence="1">
    <location>
        <begin position="53"/>
        <end position="60"/>
    </location>
    <ligand>
        <name>ATP</name>
        <dbReference type="ChEBI" id="CHEBI:30616"/>
    </ligand>
</feature>
<gene>
    <name evidence="1" type="primary">rhlB</name>
    <name type="ordered locus">HSM_0041</name>
</gene>
<protein>
    <recommendedName>
        <fullName evidence="1">ATP-dependent RNA helicase RhlB</fullName>
        <ecNumber evidence="1">3.6.4.13</ecNumber>
    </recommendedName>
</protein>
<sequence length="419" mass="47485">MQNSHLSQQRFSDLALHRIVQQAIKEKGFEFCTPIQALSLPITLKGQDIAGQAQTGTGKTIAFLTATFHHLLQKNNINSSEQPRALILAPTRELVVQIANDANFLVQATGLKTGLAYGGEGYDKQLKVIDRGIDILIGTTGRVIDYVKQGIIRLDYIQVVVLDEADRMFDLGFIRDIRYLLRKCPVPQQRLTMLFSATLSYKVRELAFEHMNDPQYVEIEPLQKTGHRIREELFYPSNQDKMALLMTLLEEEWPERCIIFSNTKHRCEEIWGYLSADGHRVGLLTGDVMQKKRLSLLKQFTDGTLDVLVATDVAARGLHIPDVTHVFNYDLPDDCEDYVHRIGRTGRAGESGISISFACEEYAINLPAIEEYIGHSIPVSQYDAKALIEDLPTPHRIKRGAFDSRSNLQRTVKRLKKTY</sequence>
<name>RHLB_HISS2</name>
<accession>B0UUZ9</accession>